<name>EFTU_ANAMM</name>
<reference key="1">
    <citation type="journal article" date="2005" name="Proc. Natl. Acad. Sci. U.S.A.">
        <title>Complete genome sequencing of Anaplasma marginale reveals that the surface is skewed to two superfamilies of outer membrane proteins.</title>
        <authorList>
            <person name="Brayton K.A."/>
            <person name="Kappmeyer L.S."/>
            <person name="Herndon D.R."/>
            <person name="Dark M.J."/>
            <person name="Tibbals D.L."/>
            <person name="Palmer G.H."/>
            <person name="McGuire T.C."/>
            <person name="Knowles D.P. Jr."/>
        </authorList>
    </citation>
    <scope>NUCLEOTIDE SEQUENCE [LARGE SCALE GENOMIC DNA]</scope>
    <source>
        <strain>St. Maries</strain>
    </source>
</reference>
<accession>Q5PBH1</accession>
<dbReference type="EC" id="3.6.5.3" evidence="2"/>
<dbReference type="EMBL" id="CP000030">
    <property type="protein sequence ID" value="AAV86358.1"/>
    <property type="molecule type" value="Genomic_DNA"/>
</dbReference>
<dbReference type="EMBL" id="CP000030">
    <property type="protein sequence ID" value="AAV86824.1"/>
    <property type="molecule type" value="Genomic_DNA"/>
</dbReference>
<dbReference type="SMR" id="Q5PBH1"/>
<dbReference type="KEGG" id="ama:AM254"/>
<dbReference type="KEGG" id="ama:AM914"/>
<dbReference type="HOGENOM" id="CLU_007265_0_1_5"/>
<dbReference type="GO" id="GO:0005829">
    <property type="term" value="C:cytosol"/>
    <property type="evidence" value="ECO:0007669"/>
    <property type="project" value="TreeGrafter"/>
</dbReference>
<dbReference type="GO" id="GO:0005525">
    <property type="term" value="F:GTP binding"/>
    <property type="evidence" value="ECO:0007669"/>
    <property type="project" value="UniProtKB-UniRule"/>
</dbReference>
<dbReference type="GO" id="GO:0003924">
    <property type="term" value="F:GTPase activity"/>
    <property type="evidence" value="ECO:0007669"/>
    <property type="project" value="InterPro"/>
</dbReference>
<dbReference type="GO" id="GO:0097216">
    <property type="term" value="F:guanosine tetraphosphate binding"/>
    <property type="evidence" value="ECO:0007669"/>
    <property type="project" value="UniProtKB-ARBA"/>
</dbReference>
<dbReference type="GO" id="GO:0003746">
    <property type="term" value="F:translation elongation factor activity"/>
    <property type="evidence" value="ECO:0007669"/>
    <property type="project" value="UniProtKB-UniRule"/>
</dbReference>
<dbReference type="CDD" id="cd01884">
    <property type="entry name" value="EF_Tu"/>
    <property type="match status" value="1"/>
</dbReference>
<dbReference type="CDD" id="cd03697">
    <property type="entry name" value="EFTU_II"/>
    <property type="match status" value="1"/>
</dbReference>
<dbReference type="CDD" id="cd03707">
    <property type="entry name" value="EFTU_III"/>
    <property type="match status" value="1"/>
</dbReference>
<dbReference type="FunFam" id="2.40.30.10:FF:000001">
    <property type="entry name" value="Elongation factor Tu"/>
    <property type="match status" value="1"/>
</dbReference>
<dbReference type="FunFam" id="3.40.50.300:FF:000003">
    <property type="entry name" value="Elongation factor Tu"/>
    <property type="match status" value="1"/>
</dbReference>
<dbReference type="Gene3D" id="3.40.50.300">
    <property type="entry name" value="P-loop containing nucleotide triphosphate hydrolases"/>
    <property type="match status" value="1"/>
</dbReference>
<dbReference type="Gene3D" id="2.40.30.10">
    <property type="entry name" value="Translation factors"/>
    <property type="match status" value="2"/>
</dbReference>
<dbReference type="HAMAP" id="MF_00118_B">
    <property type="entry name" value="EF_Tu_B"/>
    <property type="match status" value="1"/>
</dbReference>
<dbReference type="InterPro" id="IPR041709">
    <property type="entry name" value="EF-Tu_GTP-bd"/>
</dbReference>
<dbReference type="InterPro" id="IPR050055">
    <property type="entry name" value="EF-Tu_GTPase"/>
</dbReference>
<dbReference type="InterPro" id="IPR004161">
    <property type="entry name" value="EFTu-like_2"/>
</dbReference>
<dbReference type="InterPro" id="IPR033720">
    <property type="entry name" value="EFTU_2"/>
</dbReference>
<dbReference type="InterPro" id="IPR031157">
    <property type="entry name" value="G_TR_CS"/>
</dbReference>
<dbReference type="InterPro" id="IPR027417">
    <property type="entry name" value="P-loop_NTPase"/>
</dbReference>
<dbReference type="InterPro" id="IPR005225">
    <property type="entry name" value="Small_GTP-bd"/>
</dbReference>
<dbReference type="InterPro" id="IPR000795">
    <property type="entry name" value="T_Tr_GTP-bd_dom"/>
</dbReference>
<dbReference type="InterPro" id="IPR009000">
    <property type="entry name" value="Transl_B-barrel_sf"/>
</dbReference>
<dbReference type="InterPro" id="IPR009001">
    <property type="entry name" value="Transl_elong_EF1A/Init_IF2_C"/>
</dbReference>
<dbReference type="InterPro" id="IPR004541">
    <property type="entry name" value="Transl_elong_EFTu/EF1A_bac/org"/>
</dbReference>
<dbReference type="InterPro" id="IPR004160">
    <property type="entry name" value="Transl_elong_EFTu/EF1A_C"/>
</dbReference>
<dbReference type="NCBIfam" id="TIGR00485">
    <property type="entry name" value="EF-Tu"/>
    <property type="match status" value="1"/>
</dbReference>
<dbReference type="NCBIfam" id="NF000766">
    <property type="entry name" value="PRK00049.1"/>
    <property type="match status" value="1"/>
</dbReference>
<dbReference type="NCBIfam" id="NF009372">
    <property type="entry name" value="PRK12735.1"/>
    <property type="match status" value="1"/>
</dbReference>
<dbReference type="NCBIfam" id="NF009373">
    <property type="entry name" value="PRK12736.1"/>
    <property type="match status" value="1"/>
</dbReference>
<dbReference type="NCBIfam" id="TIGR00231">
    <property type="entry name" value="small_GTP"/>
    <property type="match status" value="1"/>
</dbReference>
<dbReference type="PANTHER" id="PTHR43721:SF22">
    <property type="entry name" value="ELONGATION FACTOR TU, MITOCHONDRIAL"/>
    <property type="match status" value="1"/>
</dbReference>
<dbReference type="PANTHER" id="PTHR43721">
    <property type="entry name" value="ELONGATION FACTOR TU-RELATED"/>
    <property type="match status" value="1"/>
</dbReference>
<dbReference type="Pfam" id="PF00009">
    <property type="entry name" value="GTP_EFTU"/>
    <property type="match status" value="1"/>
</dbReference>
<dbReference type="Pfam" id="PF03144">
    <property type="entry name" value="GTP_EFTU_D2"/>
    <property type="match status" value="1"/>
</dbReference>
<dbReference type="Pfam" id="PF03143">
    <property type="entry name" value="GTP_EFTU_D3"/>
    <property type="match status" value="1"/>
</dbReference>
<dbReference type="PRINTS" id="PR00315">
    <property type="entry name" value="ELONGATNFCT"/>
</dbReference>
<dbReference type="SUPFAM" id="SSF50465">
    <property type="entry name" value="EF-Tu/eEF-1alpha/eIF2-gamma C-terminal domain"/>
    <property type="match status" value="1"/>
</dbReference>
<dbReference type="SUPFAM" id="SSF52540">
    <property type="entry name" value="P-loop containing nucleoside triphosphate hydrolases"/>
    <property type="match status" value="1"/>
</dbReference>
<dbReference type="SUPFAM" id="SSF50447">
    <property type="entry name" value="Translation proteins"/>
    <property type="match status" value="1"/>
</dbReference>
<dbReference type="PROSITE" id="PS00301">
    <property type="entry name" value="G_TR_1"/>
    <property type="match status" value="1"/>
</dbReference>
<dbReference type="PROSITE" id="PS51722">
    <property type="entry name" value="G_TR_2"/>
    <property type="match status" value="1"/>
</dbReference>
<protein>
    <recommendedName>
        <fullName evidence="2">Elongation factor Tu</fullName>
        <shortName evidence="2">EF-Tu</shortName>
        <ecNumber evidence="2">3.6.5.3</ecNumber>
    </recommendedName>
</protein>
<evidence type="ECO:0000250" key="1"/>
<evidence type="ECO:0000255" key="2">
    <source>
        <dbReference type="HAMAP-Rule" id="MF_00118"/>
    </source>
</evidence>
<keyword id="KW-0963">Cytoplasm</keyword>
<keyword id="KW-0251">Elongation factor</keyword>
<keyword id="KW-0342">GTP-binding</keyword>
<keyword id="KW-0378">Hydrolase</keyword>
<keyword id="KW-0460">Magnesium</keyword>
<keyword id="KW-0479">Metal-binding</keyword>
<keyword id="KW-0547">Nucleotide-binding</keyword>
<keyword id="KW-0648">Protein biosynthesis</keyword>
<proteinExistence type="inferred from homology"/>
<sequence length="393" mass="42914">MTEGRKPHINVGTIGHVDHGKTTLTAALTTVLTRRLSGANKVVKYDEIDKAPEERARGITISTAHVEYETEGRHYAHVDCPGHADYIKNMITGAAQMDVAILVVSATDGAMPQTREHILLAKQVGVKDIVTWINKCDVVEDEEMLSIVEMEVRELLSNYGYDGDGVDVVRGSAVKALEESSDGPWSEKIMELVGALEKIELPVREKDKPFLMSVEDVFSIPGRGTVVTGRIERGVIKVGDKVDIVGLRDLQSTVCTGVEMFHKALETGEAGDNAGILLRGIKKEDVERGQVLSAPGQIRSYKAFKAEVYILKKEEGGRHTPFFSNYQPQFYVRTTDVTGSIKLPSGVEMVMPGDNLSIEVALDKPVALDKGLRFAVREGGRTVGSGIITEILE</sequence>
<feature type="chain" id="PRO_0000337315" description="Elongation factor Tu">
    <location>
        <begin position="1"/>
        <end position="393"/>
    </location>
</feature>
<feature type="domain" description="tr-type G">
    <location>
        <begin position="6"/>
        <end position="204"/>
    </location>
</feature>
<feature type="region of interest" description="G1" evidence="1">
    <location>
        <begin position="15"/>
        <end position="22"/>
    </location>
</feature>
<feature type="region of interest" description="G2" evidence="1">
    <location>
        <begin position="58"/>
        <end position="62"/>
    </location>
</feature>
<feature type="region of interest" description="G3" evidence="1">
    <location>
        <begin position="79"/>
        <end position="82"/>
    </location>
</feature>
<feature type="region of interest" description="G4" evidence="1">
    <location>
        <begin position="134"/>
        <end position="137"/>
    </location>
</feature>
<feature type="region of interest" description="G5" evidence="1">
    <location>
        <begin position="172"/>
        <end position="174"/>
    </location>
</feature>
<feature type="binding site" evidence="2">
    <location>
        <begin position="15"/>
        <end position="22"/>
    </location>
    <ligand>
        <name>GTP</name>
        <dbReference type="ChEBI" id="CHEBI:37565"/>
    </ligand>
</feature>
<feature type="binding site" evidence="2">
    <location>
        <position position="22"/>
    </location>
    <ligand>
        <name>Mg(2+)</name>
        <dbReference type="ChEBI" id="CHEBI:18420"/>
    </ligand>
</feature>
<feature type="binding site" evidence="2">
    <location>
        <begin position="79"/>
        <end position="83"/>
    </location>
    <ligand>
        <name>GTP</name>
        <dbReference type="ChEBI" id="CHEBI:37565"/>
    </ligand>
</feature>
<feature type="binding site" evidence="2">
    <location>
        <begin position="134"/>
        <end position="137"/>
    </location>
    <ligand>
        <name>GTP</name>
        <dbReference type="ChEBI" id="CHEBI:37565"/>
    </ligand>
</feature>
<organism>
    <name type="scientific">Anaplasma marginale (strain St. Maries)</name>
    <dbReference type="NCBI Taxonomy" id="234826"/>
    <lineage>
        <taxon>Bacteria</taxon>
        <taxon>Pseudomonadati</taxon>
        <taxon>Pseudomonadota</taxon>
        <taxon>Alphaproteobacteria</taxon>
        <taxon>Rickettsiales</taxon>
        <taxon>Anaplasmataceae</taxon>
        <taxon>Anaplasma</taxon>
    </lineage>
</organism>
<comment type="function">
    <text evidence="2">GTP hydrolase that promotes the GTP-dependent binding of aminoacyl-tRNA to the A-site of ribosomes during protein biosynthesis.</text>
</comment>
<comment type="catalytic activity">
    <reaction evidence="2">
        <text>GTP + H2O = GDP + phosphate + H(+)</text>
        <dbReference type="Rhea" id="RHEA:19669"/>
        <dbReference type="ChEBI" id="CHEBI:15377"/>
        <dbReference type="ChEBI" id="CHEBI:15378"/>
        <dbReference type="ChEBI" id="CHEBI:37565"/>
        <dbReference type="ChEBI" id="CHEBI:43474"/>
        <dbReference type="ChEBI" id="CHEBI:58189"/>
        <dbReference type="EC" id="3.6.5.3"/>
    </reaction>
    <physiologicalReaction direction="left-to-right" evidence="2">
        <dbReference type="Rhea" id="RHEA:19670"/>
    </physiologicalReaction>
</comment>
<comment type="subunit">
    <text evidence="2">Monomer.</text>
</comment>
<comment type="subcellular location">
    <subcellularLocation>
        <location evidence="2">Cytoplasm</location>
    </subcellularLocation>
</comment>
<comment type="similarity">
    <text evidence="2">Belongs to the TRAFAC class translation factor GTPase superfamily. Classic translation factor GTPase family. EF-Tu/EF-1A subfamily.</text>
</comment>
<gene>
    <name evidence="2" type="primary">tuf1</name>
    <name type="ordered locus">AM254</name>
</gene>
<gene>
    <name evidence="2" type="primary">tuf2</name>
    <name type="ordered locus">AM914</name>
</gene>